<organism>
    <name type="scientific">Bos taurus</name>
    <name type="common">Bovine</name>
    <dbReference type="NCBI Taxonomy" id="9913"/>
    <lineage>
        <taxon>Eukaryota</taxon>
        <taxon>Metazoa</taxon>
        <taxon>Chordata</taxon>
        <taxon>Craniata</taxon>
        <taxon>Vertebrata</taxon>
        <taxon>Euteleostomi</taxon>
        <taxon>Mammalia</taxon>
        <taxon>Eutheria</taxon>
        <taxon>Laurasiatheria</taxon>
        <taxon>Artiodactyla</taxon>
        <taxon>Ruminantia</taxon>
        <taxon>Pecora</taxon>
        <taxon>Bovidae</taxon>
        <taxon>Bovinae</taxon>
        <taxon>Bos</taxon>
    </lineage>
</organism>
<name>DJC21_BOVIN</name>
<accession>Q0II91</accession>
<protein>
    <recommendedName>
        <fullName>DnaJ homolog subfamily C member 21</fullName>
    </recommendedName>
</protein>
<feature type="chain" id="PRO_0000413160" description="DnaJ homolog subfamily C member 21">
    <location>
        <begin position="1"/>
        <end position="533"/>
    </location>
</feature>
<feature type="domain" description="J" evidence="3">
    <location>
        <begin position="3"/>
        <end position="70"/>
    </location>
</feature>
<feature type="zinc finger region" description="C2H2-type 1" evidence="2">
    <location>
        <begin position="315"/>
        <end position="339"/>
    </location>
</feature>
<feature type="zinc finger region" description="C2H2-type 2" evidence="2">
    <location>
        <begin position="484"/>
        <end position="508"/>
    </location>
</feature>
<feature type="region of interest" description="Disordered" evidence="4">
    <location>
        <begin position="278"/>
        <end position="311"/>
    </location>
</feature>
<feature type="region of interest" description="Disordered" evidence="4">
    <location>
        <begin position="327"/>
        <end position="473"/>
    </location>
</feature>
<feature type="region of interest" description="Disordered" evidence="4">
    <location>
        <begin position="503"/>
        <end position="533"/>
    </location>
</feature>
<feature type="compositionally biased region" description="Basic and acidic residues" evidence="4">
    <location>
        <begin position="291"/>
        <end position="302"/>
    </location>
</feature>
<feature type="compositionally biased region" description="Polar residues" evidence="4">
    <location>
        <begin position="357"/>
        <end position="369"/>
    </location>
</feature>
<feature type="compositionally biased region" description="Basic residues" evidence="4">
    <location>
        <begin position="381"/>
        <end position="392"/>
    </location>
</feature>
<feature type="compositionally biased region" description="Polar residues" evidence="4">
    <location>
        <begin position="393"/>
        <end position="403"/>
    </location>
</feature>
<feature type="compositionally biased region" description="Basic residues" evidence="4">
    <location>
        <begin position="455"/>
        <end position="464"/>
    </location>
</feature>
<feature type="compositionally biased region" description="Low complexity" evidence="4">
    <location>
        <begin position="512"/>
        <end position="523"/>
    </location>
</feature>
<feature type="compositionally biased region" description="Basic residues" evidence="4">
    <location>
        <begin position="524"/>
        <end position="533"/>
    </location>
</feature>
<feature type="modified residue" description="Phosphoserine" evidence="1">
    <location>
        <position position="283"/>
    </location>
</feature>
<feature type="modified residue" description="Phosphoserine" evidence="1">
    <location>
        <position position="302"/>
    </location>
</feature>
<feature type="modified residue" description="Phosphoserine" evidence="1">
    <location>
        <position position="370"/>
    </location>
</feature>
<feature type="modified residue" description="Phosphoserine" evidence="1">
    <location>
        <position position="512"/>
    </location>
</feature>
<gene>
    <name type="primary">DNAJC21</name>
</gene>
<reference key="1">
    <citation type="journal article" date="2009" name="Science">
        <title>The genome sequence of taurine cattle: a window to ruminant biology and evolution.</title>
        <authorList>
            <consortium name="The bovine genome sequencing and analysis consortium"/>
        </authorList>
    </citation>
    <scope>NUCLEOTIDE SEQUENCE [LARGE SCALE GENOMIC DNA]</scope>
    <source>
        <strain>Hereford</strain>
    </source>
</reference>
<reference key="2">
    <citation type="submission" date="2006-08" db="EMBL/GenBank/DDBJ databases">
        <authorList>
            <consortium name="NIH - Mammalian Gene Collection (MGC) project"/>
        </authorList>
    </citation>
    <scope>NUCLEOTIDE SEQUENCE [LARGE SCALE MRNA] OF 1-186</scope>
    <source>
        <strain>Crossbred X Angus</strain>
        <tissue>Liver</tissue>
    </source>
</reference>
<sequence>MKCHYEALGVRRDASEEELKKAYRKLALKWHPDKNLDNAAEAAEQFKLIQAAYDVLSDPQERAWYDNHREALLKGGLDGEYQDDSLDLLHYFTVTCYSGYGDDEKGFYTVYRNVFEMIAKEELESALEEDMEDFPTFGDSQSDYDTVVHPFYAYWQSFCTQKNFAWKEEYDTRQASNRWEKRAMEKENKKIRDKARKEKNELVRQLVAFIRKRDRRVQAHRKLVEEQNAEKARKAEAMRRQQKLKQAKLAEQYREQSWMAVADLEKELREMEAQYEKQFGDGSGEDEAEDQELRDGQDGKDSDEAEDAELYDGLYCPACDKSFKTEKAMRNHEKSKKHREMVALLKQQLEEEEANFSGPQTDENSLNANSEEEMEDAPKQKLSRKQKKKKQKPAQNYDDNFNENGIGEGVKIDPEDTNLNQNSAKESEDSLQENVGVTETVELCDDPKTEAKSVSKPKGKKAKDTKKSVRVPAEPQTMSDVLISCTTCHSEFPSRNKLFDHLKATGHARAPSSSTSLNSVTNSRNKKEKRKNR</sequence>
<comment type="function">
    <text evidence="1">May act as a co-chaperone for HSP70. May play a role in ribosomal RNA (rRNA) biogenesis, possibly in the maturation of the 60S subunit. Binds the precursor 45S rRNA.</text>
</comment>
<comment type="subunit">
    <text evidence="1">Interacts with HSPA8, PA2G4 and ZNF622.</text>
</comment>
<comment type="subcellular location">
    <subcellularLocation>
        <location evidence="1">Cytoplasm</location>
    </subcellularLocation>
    <subcellularLocation>
        <location evidence="1">Nucleus</location>
    </subcellularLocation>
    <subcellularLocation>
        <location evidence="1">Nucleus</location>
        <location evidence="1">Nucleolus</location>
    </subcellularLocation>
    <text evidence="1">Within the nucleus, localizes primarily to the nucleolus.</text>
</comment>
<comment type="sequence caution" evidence="5">
    <conflict type="miscellaneous discrepancy">
        <sequence resource="EMBL-CDS" id="AAI22751"/>
    </conflict>
    <text>Contaminating sequence. Potential poly-A sequence.</text>
</comment>
<dbReference type="EMBL" id="AAFC03039458">
    <property type="status" value="NOT_ANNOTATED_CDS"/>
    <property type="molecule type" value="Genomic_DNA"/>
</dbReference>
<dbReference type="EMBL" id="AAFC03047092">
    <property type="status" value="NOT_ANNOTATED_CDS"/>
    <property type="molecule type" value="Genomic_DNA"/>
</dbReference>
<dbReference type="EMBL" id="AAFC03047093">
    <property type="status" value="NOT_ANNOTATED_CDS"/>
    <property type="molecule type" value="Genomic_DNA"/>
</dbReference>
<dbReference type="EMBL" id="BC122750">
    <property type="protein sequence ID" value="AAI22751.1"/>
    <property type="status" value="ALT_SEQ"/>
    <property type="molecule type" value="mRNA"/>
</dbReference>
<dbReference type="RefSeq" id="NP_001179147.1">
    <property type="nucleotide sequence ID" value="NM_001192218.3"/>
</dbReference>
<dbReference type="SMR" id="Q0II91"/>
<dbReference type="FunCoup" id="Q0II91">
    <property type="interactions" value="1820"/>
</dbReference>
<dbReference type="STRING" id="9913.ENSBTAP00000020793"/>
<dbReference type="PaxDb" id="9913-ENSBTAP00000020793"/>
<dbReference type="GeneID" id="509302"/>
<dbReference type="KEGG" id="bta:509302"/>
<dbReference type="CTD" id="134218"/>
<dbReference type="eggNOG" id="KOG0714">
    <property type="taxonomic scope" value="Eukaryota"/>
</dbReference>
<dbReference type="eggNOG" id="KOG0717">
    <property type="taxonomic scope" value="Eukaryota"/>
</dbReference>
<dbReference type="HOGENOM" id="CLU_009539_1_0_1"/>
<dbReference type="InParanoid" id="Q0II91"/>
<dbReference type="OrthoDB" id="5894at2759"/>
<dbReference type="TreeFam" id="TF314518"/>
<dbReference type="Proteomes" id="UP000009136">
    <property type="component" value="Unplaced"/>
</dbReference>
<dbReference type="GO" id="GO:0005737">
    <property type="term" value="C:cytoplasm"/>
    <property type="evidence" value="ECO:0000318"/>
    <property type="project" value="GO_Central"/>
</dbReference>
<dbReference type="GO" id="GO:0005730">
    <property type="term" value="C:nucleolus"/>
    <property type="evidence" value="ECO:0007669"/>
    <property type="project" value="UniProtKB-SubCell"/>
</dbReference>
<dbReference type="GO" id="GO:0003676">
    <property type="term" value="F:nucleic acid binding"/>
    <property type="evidence" value="ECO:0007669"/>
    <property type="project" value="InterPro"/>
</dbReference>
<dbReference type="GO" id="GO:0008270">
    <property type="term" value="F:zinc ion binding"/>
    <property type="evidence" value="ECO:0007669"/>
    <property type="project" value="UniProtKB-KW"/>
</dbReference>
<dbReference type="CDD" id="cd06257">
    <property type="entry name" value="DnaJ"/>
    <property type="match status" value="1"/>
</dbReference>
<dbReference type="FunFam" id="1.10.287.110:FF:000046">
    <property type="entry name" value="dnaJ homolog subfamily C member 21"/>
    <property type="match status" value="1"/>
</dbReference>
<dbReference type="FunFam" id="3.30.160.60:FF:001809">
    <property type="entry name" value="dnaJ homolog subfamily C member 21 isoform X1"/>
    <property type="match status" value="1"/>
</dbReference>
<dbReference type="Gene3D" id="3.30.160.60">
    <property type="entry name" value="Classic Zinc Finger"/>
    <property type="match status" value="1"/>
</dbReference>
<dbReference type="Gene3D" id="1.10.287.110">
    <property type="entry name" value="DnaJ domain"/>
    <property type="match status" value="1"/>
</dbReference>
<dbReference type="InterPro" id="IPR051964">
    <property type="entry name" value="Chaperone_stress_response"/>
</dbReference>
<dbReference type="InterPro" id="IPR001623">
    <property type="entry name" value="DnaJ_domain"/>
</dbReference>
<dbReference type="InterPro" id="IPR018253">
    <property type="entry name" value="DnaJ_domain_CS"/>
</dbReference>
<dbReference type="InterPro" id="IPR036869">
    <property type="entry name" value="J_dom_sf"/>
</dbReference>
<dbReference type="InterPro" id="IPR003604">
    <property type="entry name" value="Matrin/U1-like-C_Znf_C2H2"/>
</dbReference>
<dbReference type="InterPro" id="IPR022755">
    <property type="entry name" value="Znf_C2H2_jaz"/>
</dbReference>
<dbReference type="InterPro" id="IPR036236">
    <property type="entry name" value="Znf_C2H2_sf"/>
</dbReference>
<dbReference type="InterPro" id="IPR013087">
    <property type="entry name" value="Znf_C2H2_type"/>
</dbReference>
<dbReference type="InterPro" id="IPR054076">
    <property type="entry name" value="ZUO1-like_ZHD"/>
</dbReference>
<dbReference type="PANTHER" id="PTHR44029">
    <property type="entry name" value="DNAJ HOMOLOG SUBFAMILY C MEMBER 21"/>
    <property type="match status" value="1"/>
</dbReference>
<dbReference type="PANTHER" id="PTHR44029:SF1">
    <property type="entry name" value="DNAJ HOMOLOG SUBFAMILY C MEMBER 21"/>
    <property type="match status" value="1"/>
</dbReference>
<dbReference type="Pfam" id="PF00226">
    <property type="entry name" value="DnaJ"/>
    <property type="match status" value="1"/>
</dbReference>
<dbReference type="Pfam" id="PF12171">
    <property type="entry name" value="zf-C2H2_jaz"/>
    <property type="match status" value="1"/>
</dbReference>
<dbReference type="Pfam" id="PF21884">
    <property type="entry name" value="ZUO1-like_ZHD"/>
    <property type="match status" value="1"/>
</dbReference>
<dbReference type="PRINTS" id="PR00625">
    <property type="entry name" value="JDOMAIN"/>
</dbReference>
<dbReference type="SMART" id="SM00271">
    <property type="entry name" value="DnaJ"/>
    <property type="match status" value="1"/>
</dbReference>
<dbReference type="SMART" id="SM00355">
    <property type="entry name" value="ZnF_C2H2"/>
    <property type="match status" value="2"/>
</dbReference>
<dbReference type="SMART" id="SM00451">
    <property type="entry name" value="ZnF_U1"/>
    <property type="match status" value="1"/>
</dbReference>
<dbReference type="SUPFAM" id="SSF57667">
    <property type="entry name" value="beta-beta-alpha zinc fingers"/>
    <property type="match status" value="1"/>
</dbReference>
<dbReference type="SUPFAM" id="SSF46565">
    <property type="entry name" value="Chaperone J-domain"/>
    <property type="match status" value="1"/>
</dbReference>
<dbReference type="PROSITE" id="PS00636">
    <property type="entry name" value="DNAJ_1"/>
    <property type="match status" value="1"/>
</dbReference>
<dbReference type="PROSITE" id="PS50076">
    <property type="entry name" value="DNAJ_2"/>
    <property type="match status" value="1"/>
</dbReference>
<dbReference type="PROSITE" id="PS00028">
    <property type="entry name" value="ZINC_FINGER_C2H2_1"/>
    <property type="match status" value="2"/>
</dbReference>
<dbReference type="PROSITE" id="PS50157">
    <property type="entry name" value="ZINC_FINGER_C2H2_2"/>
    <property type="match status" value="1"/>
</dbReference>
<proteinExistence type="evidence at transcript level"/>
<keyword id="KW-0143">Chaperone</keyword>
<keyword id="KW-0963">Cytoplasm</keyword>
<keyword id="KW-0479">Metal-binding</keyword>
<keyword id="KW-0539">Nucleus</keyword>
<keyword id="KW-0597">Phosphoprotein</keyword>
<keyword id="KW-1185">Reference proteome</keyword>
<keyword id="KW-0677">Repeat</keyword>
<keyword id="KW-0862">Zinc</keyword>
<keyword id="KW-0863">Zinc-finger</keyword>
<evidence type="ECO:0000250" key="1">
    <source>
        <dbReference type="UniProtKB" id="Q5F1R6"/>
    </source>
</evidence>
<evidence type="ECO:0000255" key="2">
    <source>
        <dbReference type="PROSITE-ProRule" id="PRU00042"/>
    </source>
</evidence>
<evidence type="ECO:0000255" key="3">
    <source>
        <dbReference type="PROSITE-ProRule" id="PRU00286"/>
    </source>
</evidence>
<evidence type="ECO:0000256" key="4">
    <source>
        <dbReference type="SAM" id="MobiDB-lite"/>
    </source>
</evidence>
<evidence type="ECO:0000305" key="5"/>